<feature type="chain" id="PRO_0000222232" description="Transcriptional activator protein">
    <location>
        <begin position="1"/>
        <end position="135"/>
    </location>
</feature>
<feature type="zinc finger region" evidence="1">
    <location>
        <begin position="37"/>
        <end position="54"/>
    </location>
</feature>
<feature type="region of interest" description="Disordered" evidence="4">
    <location>
        <begin position="77"/>
        <end position="117"/>
    </location>
</feature>
<feature type="region of interest" description="Transactivation" evidence="1">
    <location>
        <begin position="120"/>
        <end position="135"/>
    </location>
</feature>
<feature type="short sequence motif" description="Nuclear localization signal" evidence="1">
    <location>
        <begin position="17"/>
        <end position="32"/>
    </location>
</feature>
<feature type="compositionally biased region" description="Polar residues" evidence="4">
    <location>
        <begin position="77"/>
        <end position="87"/>
    </location>
</feature>
<feature type="compositionally biased region" description="Polar residues" evidence="4">
    <location>
        <begin position="101"/>
        <end position="115"/>
    </location>
</feature>
<comment type="function">
    <text evidence="2">Multifunctional protein that modulates host antiviral defenses and promotes host attractiveness to insect vectors. Acts as a suppressor of RNA-mediated gene silencing, also known as post-transcriptional gene silencing (PTGS), a mechanism of plant viral defense that limits the accumulation of viral RNAs. TrAP suppresses the host RNA silencing by inhibiting adenosine kinase 2 (ADK2), a kinase involved in a general methylation pathway. Also suppresses the host basal defense by interacting with and inhibiting SNF1 kinase, a key regulator of cell metabolism implicated in innate antiviral defense.</text>
</comment>
<comment type="function">
    <text evidence="5">Inhibits signal transduction by the phytohormone jasmonate, making the infected plant more attractive to aphids, which are the second host to play a role as a dissemination vector (PubMed:30789967). Acts by binding to ubiquitin precursor RPS27A, thereby preventing ubiquitin degradation of JAZ (PubMed:30789967).</text>
</comment>
<comment type="subunit">
    <text evidence="1 2 5">Monomer. Homodimer. Homooligomer. Self-interaction correlates with nuclear localization and efficient activation of transcription. Monomers suppress local silencing by interacting with and inactivating host adenosine kinase 2 (ADK2) in the cytoplasm. Interacts with and inhibits host SNF1 kinase. Binds to ssDNA. May interact with host RPS27A (PubMed:30789967).</text>
</comment>
<comment type="subcellular location">
    <subcellularLocation>
        <location evidence="5">Host nucleus</location>
    </subcellularLocation>
    <subcellularLocation>
        <location evidence="2">Host cytoplasm</location>
    </subcellularLocation>
    <text evidence="2">The phosphorylated form appears to accumulate almost exclusively in the nucleus, whereas the non-phosphorylated form is found in both nucleus and cytoplasm.</text>
</comment>
<comment type="domain">
    <text evidence="3">The zinc finger and the transactivation region are involved in PTGS suppression.</text>
</comment>
<comment type="PTM">
    <text evidence="2">Phosphorylated.</text>
</comment>
<comment type="similarity">
    <text evidence="6">Belongs to the geminiviridae transcriptional activator protein family.</text>
</comment>
<sequence>MQPSSPSTSHCSQVSIKVQHKIAKKKPIRRKRVDLDCGCSYYLHLNCNNHGFTHRGTHHCSSGREWRFYLGDKQSPLFQDNRTQPEAISNEPRHHFHSDKIQPQHQEGNGDSQMFSRLPNLDDITASDWSFLKSI</sequence>
<name>TRAP_TYLCI</name>
<evidence type="ECO:0000250" key="1"/>
<evidence type="ECO:0000250" key="2">
    <source>
        <dbReference type="UniProtKB" id="Q91J26"/>
    </source>
</evidence>
<evidence type="ECO:0000250" key="3">
    <source>
        <dbReference type="UniProtKB" id="Q9DXE6"/>
    </source>
</evidence>
<evidence type="ECO:0000256" key="4">
    <source>
        <dbReference type="SAM" id="MobiDB-lite"/>
    </source>
</evidence>
<evidence type="ECO:0000269" key="5">
    <source>
    </source>
</evidence>
<evidence type="ECO:0000305" key="6"/>
<gene>
    <name type="ORF">C2</name>
    <name type="ORF">L2</name>
</gene>
<organism>
    <name type="scientific">Tomato yellow leaf curl virus (strain Israel)</name>
    <name type="common">TYLCV</name>
    <dbReference type="NCBI Taxonomy" id="66366"/>
    <lineage>
        <taxon>Viruses</taxon>
        <taxon>Monodnaviria</taxon>
        <taxon>Shotokuvirae</taxon>
        <taxon>Cressdnaviricota</taxon>
        <taxon>Repensiviricetes</taxon>
        <taxon>Geplafuvirales</taxon>
        <taxon>Geminiviridae</taxon>
        <taxon>Begomovirus</taxon>
        <taxon>Tomato yellow leaf curl virus</taxon>
    </lineage>
</organism>
<accession>P27262</accession>
<protein>
    <recommendedName>
        <fullName>Transcriptional activator protein</fullName>
        <shortName>TrAP</shortName>
    </recommendedName>
    <alternativeName>
        <fullName>Protein C2</fullName>
    </alternativeName>
    <alternativeName>
        <fullName>Protein L2</fullName>
    </alternativeName>
</protein>
<dbReference type="EMBL" id="X15656">
    <property type="protein sequence ID" value="CAA33689.1"/>
    <property type="molecule type" value="Genomic_DNA"/>
</dbReference>
<dbReference type="PIR" id="C40779">
    <property type="entry name" value="QQCVC4"/>
</dbReference>
<dbReference type="Proteomes" id="UP000007547">
    <property type="component" value="Genome"/>
</dbReference>
<dbReference type="GO" id="GO:0030430">
    <property type="term" value="C:host cell cytoplasm"/>
    <property type="evidence" value="ECO:0007669"/>
    <property type="project" value="UniProtKB-SubCell"/>
</dbReference>
<dbReference type="GO" id="GO:0042025">
    <property type="term" value="C:host cell nucleus"/>
    <property type="evidence" value="ECO:0007669"/>
    <property type="project" value="UniProtKB-SubCell"/>
</dbReference>
<dbReference type="GO" id="GO:0019028">
    <property type="term" value="C:viral capsid"/>
    <property type="evidence" value="ECO:0007669"/>
    <property type="project" value="InterPro"/>
</dbReference>
<dbReference type="GO" id="GO:0003677">
    <property type="term" value="F:DNA binding"/>
    <property type="evidence" value="ECO:0007669"/>
    <property type="project" value="UniProtKB-KW"/>
</dbReference>
<dbReference type="GO" id="GO:0005198">
    <property type="term" value="F:structural molecule activity"/>
    <property type="evidence" value="ECO:0007669"/>
    <property type="project" value="InterPro"/>
</dbReference>
<dbReference type="GO" id="GO:0008270">
    <property type="term" value="F:zinc ion binding"/>
    <property type="evidence" value="ECO:0007669"/>
    <property type="project" value="UniProtKB-KW"/>
</dbReference>
<dbReference type="GO" id="GO:0052170">
    <property type="term" value="P:symbiont-mediated suppression of host innate immune response"/>
    <property type="evidence" value="ECO:0007669"/>
    <property type="project" value="UniProtKB-KW"/>
</dbReference>
<dbReference type="InterPro" id="IPR000942">
    <property type="entry name" value="Gemini_AL2"/>
</dbReference>
<dbReference type="Pfam" id="PF01440">
    <property type="entry name" value="Gemini_AL2"/>
    <property type="match status" value="1"/>
</dbReference>
<dbReference type="PRINTS" id="PR00230">
    <property type="entry name" value="GEMCOATAL2"/>
</dbReference>
<reference key="1">
    <citation type="journal article" date="1991" name="Virology">
        <title>Tomato yellow leaf curl virus: a whitefly-transmitted geminivirus with a single genomic component.</title>
        <authorList>
            <person name="Navot N."/>
            <person name="Pichersky E."/>
            <person name="Zeidan M."/>
            <person name="Zamir D."/>
            <person name="Czosnek H."/>
        </authorList>
    </citation>
    <scope>NUCLEOTIDE SEQUENCE [GENOMIC DNA]</scope>
</reference>
<reference key="2">
    <citation type="journal article" date="1996" name="Virology">
        <title>DNA-binding activity of the C2 protein of tomato yellow leaf curl geminivirus.</title>
        <authorList>
            <person name="Noris E."/>
            <person name="Jupin I."/>
            <person name="Accotto G.P."/>
            <person name="Gronenborn B."/>
        </authorList>
    </citation>
    <scope>DNA-BINDING</scope>
</reference>
<reference key="3">
    <citation type="journal article" date="2019" name="PLoS Pathog.">
        <title>Plant begomoviruses subvert ubiquitination to suppress plant defenses against insect vectors.</title>
        <authorList>
            <person name="Li P."/>
            <person name="Liu C."/>
            <person name="Deng W.H."/>
            <person name="Yao D.M."/>
            <person name="Pan L.L."/>
            <person name="Li Y.Q."/>
            <person name="Liu Y.Q."/>
            <person name="Liang Y."/>
            <person name="Zhou X.P."/>
            <person name="Wang X.W."/>
        </authorList>
    </citation>
    <scope>FUNCTION</scope>
    <scope>INTERACTION WITH HOST RPS27A</scope>
    <scope>SUBCELLULAR LOCATION</scope>
</reference>
<proteinExistence type="evidence at protein level"/>
<organismHost>
    <name type="scientific">Cynanchum acutum</name>
    <dbReference type="NCBI Taxonomy" id="185024"/>
</organismHost>
<organismHost>
    <name type="scientific">Malva parviflora</name>
    <name type="common">Little mallow</name>
    <name type="synonym">Cheeseweed mallow</name>
    <dbReference type="NCBI Taxonomy" id="145753"/>
</organismHost>
<organismHost>
    <name type="scientific">Solanum lycopersicum</name>
    <name type="common">Tomato</name>
    <name type="synonym">Lycopersicon esculentum</name>
    <dbReference type="NCBI Taxonomy" id="4081"/>
</organismHost>
<keyword id="KW-0010">Activator</keyword>
<keyword id="KW-0238">DNA-binding</keyword>
<keyword id="KW-1035">Host cytoplasm</keyword>
<keyword id="KW-1048">Host nucleus</keyword>
<keyword id="KW-0945">Host-virus interaction</keyword>
<keyword id="KW-1090">Inhibition of host innate immune response by virus</keyword>
<keyword id="KW-0479">Metal-binding</keyword>
<keyword id="KW-0597">Phosphoprotein</keyword>
<keyword id="KW-1185">Reference proteome</keyword>
<keyword id="KW-0941">Suppressor of RNA silencing</keyword>
<keyword id="KW-0899">Viral immunoevasion</keyword>
<keyword id="KW-0862">Zinc</keyword>
<keyword id="KW-0863">Zinc-finger</keyword>